<accession>P01110</accession>
<organism>
    <name type="scientific">Avian myelocytomatosis virus 29</name>
    <name type="common">Avian myelocytomatosis virus MC29</name>
    <dbReference type="NCBI Taxonomy" id="11868"/>
    <lineage>
        <taxon>Viruses</taxon>
        <taxon>Riboviria</taxon>
        <taxon>Pararnavirae</taxon>
        <taxon>Artverviricota</taxon>
        <taxon>Revtraviricetes</taxon>
        <taxon>Ortervirales</taxon>
        <taxon>Retroviridae</taxon>
        <taxon>Orthoretrovirinae</taxon>
        <taxon>Alpharetrovirus</taxon>
    </lineage>
</organism>
<gene>
    <name type="primary">MYC</name>
</gene>
<comment type="function">
    <text>Transforms avian and murine macrophages and fibroblasts as well as murine B-lymphoid cells.</text>
</comment>
<comment type="subunit">
    <text>Efficient DNA binding requires dimerization with another bHLH protein.</text>
</comment>
<comment type="subcellular location">
    <subcellularLocation>
        <location evidence="1">Host nucleus</location>
    </subcellularLocation>
</comment>
<comment type="miscellaneous">
    <text>This protein is synthesized as a Gag-vMyc chimeric protein. The sequence shown here corresponds to the Myc homolog fragment of the chimera.</text>
</comment>
<comment type="sequence caution" evidence="4">
    <conflict type="erroneous initiation">
        <sequence resource="EMBL-CDS" id="CAA24498"/>
    </conflict>
</comment>
<comment type="sequence caution" evidence="4">
    <conflict type="erroneous initiation">
        <sequence resource="EMBL-CDS" id="CAA24499"/>
    </conflict>
</comment>
<protein>
    <recommendedName>
        <fullName>Viral myc transforming protein</fullName>
        <shortName>v-Myc</shortName>
    </recommendedName>
</protein>
<name>MYC_AVIMC</name>
<reference key="1">
    <citation type="journal article" date="1983" name="Proc. Natl. Acad. Sci. U.S.A.">
        <title>Nucleotide sequence analysis of the proviral genome of avian myelocytomatosis virus (MC29).</title>
        <authorList>
            <person name="Reddy E.P."/>
            <person name="Reynolds R.K."/>
            <person name="Watson D.K."/>
            <person name="Schultz R.A."/>
            <person name="Lautenberger J."/>
            <person name="Papas T.S."/>
        </authorList>
    </citation>
    <scope>NUCLEOTIDE SEQUENCE [GENOMIC DNA]</scope>
</reference>
<reference key="2">
    <citation type="journal article" date="1983" name="Proc. Natl. Acad. Sci. U.S.A.">
        <title>Nucleotide sequence to the v-myc oncogene of avian retrovirus MC29.</title>
        <authorList>
            <person name="Alitalo K."/>
            <person name="Bishop J.M."/>
            <person name="Smith D.H."/>
            <person name="Chen E.Y."/>
            <person name="Colby W.W."/>
            <person name="Levinson A.D."/>
        </authorList>
    </citation>
    <scope>NUCLEOTIDE SEQUENCE [GENOMIC DNA]</scope>
</reference>
<evidence type="ECO:0000250" key="1"/>
<evidence type="ECO:0000255" key="2">
    <source>
        <dbReference type="PROSITE-ProRule" id="PRU00981"/>
    </source>
</evidence>
<evidence type="ECO:0000256" key="3">
    <source>
        <dbReference type="SAM" id="MobiDB-lite"/>
    </source>
</evidence>
<evidence type="ECO:0000305" key="4"/>
<proteinExistence type="inferred from homology"/>
<keyword id="KW-0238">DNA-binding</keyword>
<keyword id="KW-1048">Host nucleus</keyword>
<keyword id="KW-0553">Oncogene</keyword>
<dbReference type="EMBL" id="V01173">
    <property type="protein sequence ID" value="CAA24498.1"/>
    <property type="status" value="ALT_INIT"/>
    <property type="molecule type" value="Genomic_DNA"/>
</dbReference>
<dbReference type="EMBL" id="V01174">
    <property type="protein sequence ID" value="CAA24499.1"/>
    <property type="status" value="ALT_INIT"/>
    <property type="molecule type" value="Genomic_DNA"/>
</dbReference>
<dbReference type="SMR" id="P01110"/>
<dbReference type="MINT" id="P01110"/>
<dbReference type="KEGG" id="vg:1491913"/>
<dbReference type="GO" id="GO:0042025">
    <property type="term" value="C:host cell nucleus"/>
    <property type="evidence" value="ECO:0007669"/>
    <property type="project" value="UniProtKB-SubCell"/>
</dbReference>
<dbReference type="GO" id="GO:0003677">
    <property type="term" value="F:DNA binding"/>
    <property type="evidence" value="ECO:0007669"/>
    <property type="project" value="UniProtKB-KW"/>
</dbReference>
<dbReference type="GO" id="GO:0003700">
    <property type="term" value="F:DNA-binding transcription factor activity"/>
    <property type="evidence" value="ECO:0007669"/>
    <property type="project" value="InterPro"/>
</dbReference>
<dbReference type="GO" id="GO:0046983">
    <property type="term" value="F:protein dimerization activity"/>
    <property type="evidence" value="ECO:0007669"/>
    <property type="project" value="InterPro"/>
</dbReference>
<dbReference type="CDD" id="cd11458">
    <property type="entry name" value="bHLHzip_c-Myc"/>
    <property type="match status" value="1"/>
</dbReference>
<dbReference type="FunFam" id="4.10.280.10:FF:000019">
    <property type="entry name" value="Myc proto-oncogene protein"/>
    <property type="match status" value="1"/>
</dbReference>
<dbReference type="Gene3D" id="4.10.280.10">
    <property type="entry name" value="Helix-loop-helix DNA-binding domain"/>
    <property type="match status" value="1"/>
</dbReference>
<dbReference type="InterPro" id="IPR011598">
    <property type="entry name" value="bHLH_dom"/>
</dbReference>
<dbReference type="InterPro" id="IPR036638">
    <property type="entry name" value="HLH_DNA-bd_sf"/>
</dbReference>
<dbReference type="InterPro" id="IPR003327">
    <property type="entry name" value="Myc-LZ"/>
</dbReference>
<dbReference type="InterPro" id="IPR050433">
    <property type="entry name" value="Myc_transcription_factors"/>
</dbReference>
<dbReference type="InterPro" id="IPR002418">
    <property type="entry name" value="Tscrpt_reg_Myc"/>
</dbReference>
<dbReference type="InterPro" id="IPR012682">
    <property type="entry name" value="Tscrpt_reg_Myc_N"/>
</dbReference>
<dbReference type="PANTHER" id="PTHR45851">
    <property type="entry name" value="MYC PROTO-ONCOGENE"/>
    <property type="match status" value="1"/>
</dbReference>
<dbReference type="Pfam" id="PF00010">
    <property type="entry name" value="HLH"/>
    <property type="match status" value="1"/>
</dbReference>
<dbReference type="Pfam" id="PF02344">
    <property type="entry name" value="Myc-LZ"/>
    <property type="match status" value="1"/>
</dbReference>
<dbReference type="Pfam" id="PF01056">
    <property type="entry name" value="Myc_N"/>
    <property type="match status" value="1"/>
</dbReference>
<dbReference type="PIRSF" id="PIRSF001705">
    <property type="entry name" value="Myc_protein"/>
    <property type="match status" value="1"/>
</dbReference>
<dbReference type="PRINTS" id="PR00044">
    <property type="entry name" value="LEUZIPPRMYC"/>
</dbReference>
<dbReference type="SMART" id="SM00353">
    <property type="entry name" value="HLH"/>
    <property type="match status" value="1"/>
</dbReference>
<dbReference type="SUPFAM" id="SSF47459">
    <property type="entry name" value="HLH, helix-loop-helix DNA-binding domain"/>
    <property type="match status" value="1"/>
</dbReference>
<dbReference type="PROSITE" id="PS50888">
    <property type="entry name" value="BHLH"/>
    <property type="match status" value="1"/>
</dbReference>
<sequence length="416" mass="46095">MPLSASLPSKNYDYDYDSVQPYFYFEEEEENFYLAAQQRGSELQPPAPSEDIWKKFELLPMPPLSPSRRSSLAAASCFPSTADQLEMVTELLGGDMVNQSFICDPDDESFVKSIIIQDCMWSGFSAAAKLEKVVSEKLATYQASRQEGGPAAASRPGPPPSGPPPPPAGPAASAGLYLHDLGAAAADCIDPSVVFPYPLSERAPRAAPPGANPAALLGVDTPPTTSSDSEEEQEEDEEIDVVTLAEANESESSTESSTEASEEHCKPHHSPLVLKRCHVNIHQHNYAAPPSTKVEYPAAKRLKLDSGRVLKQISNNRKCSSPRTLDSEENDKRRTHNVLERQRRNELKLRFFALRDQIPEVANNEKAPKVVILKKATEYVLSLQSDEHKLIAEKEQLRRRREQLKHNLEQLRNSRA</sequence>
<organismHost>
    <name type="scientific">Galliformes</name>
    <dbReference type="NCBI Taxonomy" id="8976"/>
</organismHost>
<feature type="chain" id="PRO_0000127308" description="Viral myc transforming protein">
    <location>
        <begin position="1"/>
        <end position="416"/>
    </location>
</feature>
<feature type="domain" description="bHLH" evidence="2">
    <location>
        <begin position="331"/>
        <end position="383"/>
    </location>
</feature>
<feature type="region of interest" description="Disordered" evidence="3">
    <location>
        <begin position="144"/>
        <end position="174"/>
    </location>
</feature>
<feature type="region of interest" description="Disordered" evidence="3">
    <location>
        <begin position="203"/>
        <end position="267"/>
    </location>
</feature>
<feature type="region of interest" description="Disordered" evidence="3">
    <location>
        <begin position="314"/>
        <end position="336"/>
    </location>
</feature>
<feature type="region of interest" description="Leucine-zipper">
    <location>
        <begin position="383"/>
        <end position="411"/>
    </location>
</feature>
<feature type="compositionally biased region" description="Pro residues" evidence="3">
    <location>
        <begin position="156"/>
        <end position="169"/>
    </location>
</feature>
<feature type="compositionally biased region" description="Low complexity" evidence="3">
    <location>
        <begin position="212"/>
        <end position="227"/>
    </location>
</feature>
<feature type="compositionally biased region" description="Acidic residues" evidence="3">
    <location>
        <begin position="228"/>
        <end position="240"/>
    </location>
</feature>
<feature type="compositionally biased region" description="Low complexity" evidence="3">
    <location>
        <begin position="245"/>
        <end position="259"/>
    </location>
</feature>
<feature type="compositionally biased region" description="Polar residues" evidence="3">
    <location>
        <begin position="314"/>
        <end position="324"/>
    </location>
</feature>
<feature type="sequence conflict" description="In Ref. 2; CAA24498." evidence="4" ref="2">
    <original>Q</original>
    <variation>R</variation>
    <location>
        <position position="146"/>
    </location>
</feature>
<feature type="sequence conflict" description="In Ref. 2; CAA24498." evidence="4" ref="2">
    <original>K</original>
    <variation>R</variation>
    <location>
        <position position="389"/>
    </location>
</feature>